<comment type="function">
    <text evidence="1">Cell wall formation. Adds enolpyruvyl to UDP-N-acetylglucosamine.</text>
</comment>
<comment type="catalytic activity">
    <reaction evidence="1">
        <text>phosphoenolpyruvate + UDP-N-acetyl-alpha-D-glucosamine = UDP-N-acetyl-3-O-(1-carboxyvinyl)-alpha-D-glucosamine + phosphate</text>
        <dbReference type="Rhea" id="RHEA:18681"/>
        <dbReference type="ChEBI" id="CHEBI:43474"/>
        <dbReference type="ChEBI" id="CHEBI:57705"/>
        <dbReference type="ChEBI" id="CHEBI:58702"/>
        <dbReference type="ChEBI" id="CHEBI:68483"/>
        <dbReference type="EC" id="2.5.1.7"/>
    </reaction>
</comment>
<comment type="pathway">
    <text evidence="1">Cell wall biogenesis; peptidoglycan biosynthesis.</text>
</comment>
<comment type="subcellular location">
    <subcellularLocation>
        <location evidence="1">Cytoplasm</location>
    </subcellularLocation>
</comment>
<comment type="similarity">
    <text evidence="1">Belongs to the EPSP synthase family. MurA subfamily.</text>
</comment>
<accession>A0L6Y9</accession>
<protein>
    <recommendedName>
        <fullName evidence="1">UDP-N-acetylglucosamine 1-carboxyvinyltransferase</fullName>
        <ecNumber evidence="1">2.5.1.7</ecNumber>
    </recommendedName>
    <alternativeName>
        <fullName evidence="1">Enoylpyruvate transferase</fullName>
    </alternativeName>
    <alternativeName>
        <fullName evidence="1">UDP-N-acetylglucosamine enolpyruvyl transferase</fullName>
        <shortName evidence="1">EPT</shortName>
    </alternativeName>
</protein>
<name>MURA_MAGMM</name>
<dbReference type="EC" id="2.5.1.7" evidence="1"/>
<dbReference type="EMBL" id="CP000471">
    <property type="protein sequence ID" value="ABK43732.1"/>
    <property type="molecule type" value="Genomic_DNA"/>
</dbReference>
<dbReference type="RefSeq" id="WP_011712887.1">
    <property type="nucleotide sequence ID" value="NC_008576.1"/>
</dbReference>
<dbReference type="SMR" id="A0L6Y9"/>
<dbReference type="STRING" id="156889.Mmc1_1221"/>
<dbReference type="KEGG" id="mgm:Mmc1_1221"/>
<dbReference type="eggNOG" id="COG0766">
    <property type="taxonomic scope" value="Bacteria"/>
</dbReference>
<dbReference type="HOGENOM" id="CLU_027387_0_0_5"/>
<dbReference type="OrthoDB" id="9803760at2"/>
<dbReference type="UniPathway" id="UPA00219"/>
<dbReference type="Proteomes" id="UP000002586">
    <property type="component" value="Chromosome"/>
</dbReference>
<dbReference type="GO" id="GO:0005737">
    <property type="term" value="C:cytoplasm"/>
    <property type="evidence" value="ECO:0007669"/>
    <property type="project" value="UniProtKB-SubCell"/>
</dbReference>
<dbReference type="GO" id="GO:0008760">
    <property type="term" value="F:UDP-N-acetylglucosamine 1-carboxyvinyltransferase activity"/>
    <property type="evidence" value="ECO:0007669"/>
    <property type="project" value="UniProtKB-UniRule"/>
</dbReference>
<dbReference type="GO" id="GO:0051301">
    <property type="term" value="P:cell division"/>
    <property type="evidence" value="ECO:0007669"/>
    <property type="project" value="UniProtKB-KW"/>
</dbReference>
<dbReference type="GO" id="GO:0071555">
    <property type="term" value="P:cell wall organization"/>
    <property type="evidence" value="ECO:0007669"/>
    <property type="project" value="UniProtKB-KW"/>
</dbReference>
<dbReference type="GO" id="GO:0009252">
    <property type="term" value="P:peptidoglycan biosynthetic process"/>
    <property type="evidence" value="ECO:0007669"/>
    <property type="project" value="UniProtKB-UniRule"/>
</dbReference>
<dbReference type="GO" id="GO:0008360">
    <property type="term" value="P:regulation of cell shape"/>
    <property type="evidence" value="ECO:0007669"/>
    <property type="project" value="UniProtKB-KW"/>
</dbReference>
<dbReference type="GO" id="GO:0019277">
    <property type="term" value="P:UDP-N-acetylgalactosamine biosynthetic process"/>
    <property type="evidence" value="ECO:0007669"/>
    <property type="project" value="InterPro"/>
</dbReference>
<dbReference type="CDD" id="cd01555">
    <property type="entry name" value="UdpNAET"/>
    <property type="match status" value="1"/>
</dbReference>
<dbReference type="FunFam" id="3.65.10.10:FF:000001">
    <property type="entry name" value="UDP-N-acetylglucosamine 1-carboxyvinyltransferase"/>
    <property type="match status" value="1"/>
</dbReference>
<dbReference type="Gene3D" id="3.65.10.10">
    <property type="entry name" value="Enolpyruvate transferase domain"/>
    <property type="match status" value="2"/>
</dbReference>
<dbReference type="HAMAP" id="MF_00111">
    <property type="entry name" value="MurA"/>
    <property type="match status" value="1"/>
</dbReference>
<dbReference type="InterPro" id="IPR001986">
    <property type="entry name" value="Enolpyruvate_Tfrase_dom"/>
</dbReference>
<dbReference type="InterPro" id="IPR036968">
    <property type="entry name" value="Enolpyruvate_Tfrase_sf"/>
</dbReference>
<dbReference type="InterPro" id="IPR050068">
    <property type="entry name" value="MurA_subfamily"/>
</dbReference>
<dbReference type="InterPro" id="IPR013792">
    <property type="entry name" value="RNA3'P_cycl/enolpyr_Trfase_a/b"/>
</dbReference>
<dbReference type="InterPro" id="IPR005750">
    <property type="entry name" value="UDP_GlcNAc_COvinyl_MurA"/>
</dbReference>
<dbReference type="NCBIfam" id="TIGR01072">
    <property type="entry name" value="murA"/>
    <property type="match status" value="1"/>
</dbReference>
<dbReference type="NCBIfam" id="NF006873">
    <property type="entry name" value="PRK09369.1"/>
    <property type="match status" value="1"/>
</dbReference>
<dbReference type="PANTHER" id="PTHR43783">
    <property type="entry name" value="UDP-N-ACETYLGLUCOSAMINE 1-CARBOXYVINYLTRANSFERASE"/>
    <property type="match status" value="1"/>
</dbReference>
<dbReference type="PANTHER" id="PTHR43783:SF1">
    <property type="entry name" value="UDP-N-ACETYLGLUCOSAMINE 1-CARBOXYVINYLTRANSFERASE"/>
    <property type="match status" value="1"/>
</dbReference>
<dbReference type="Pfam" id="PF00275">
    <property type="entry name" value="EPSP_synthase"/>
    <property type="match status" value="1"/>
</dbReference>
<dbReference type="SUPFAM" id="SSF55205">
    <property type="entry name" value="EPT/RTPC-like"/>
    <property type="match status" value="1"/>
</dbReference>
<gene>
    <name evidence="1" type="primary">murA</name>
    <name type="ordered locus">Mmc1_1221</name>
</gene>
<feature type="chain" id="PRO_1000023052" description="UDP-N-acetylglucosamine 1-carboxyvinyltransferase">
    <location>
        <begin position="1"/>
        <end position="419"/>
    </location>
</feature>
<feature type="active site" description="Proton donor" evidence="1">
    <location>
        <position position="117"/>
    </location>
</feature>
<feature type="binding site" evidence="1">
    <location>
        <begin position="22"/>
        <end position="23"/>
    </location>
    <ligand>
        <name>phosphoenolpyruvate</name>
        <dbReference type="ChEBI" id="CHEBI:58702"/>
    </ligand>
</feature>
<feature type="binding site" evidence="1">
    <location>
        <position position="93"/>
    </location>
    <ligand>
        <name>UDP-N-acetyl-alpha-D-glucosamine</name>
        <dbReference type="ChEBI" id="CHEBI:57705"/>
    </ligand>
</feature>
<feature type="binding site" evidence="1">
    <location>
        <position position="306"/>
    </location>
    <ligand>
        <name>UDP-N-acetyl-alpha-D-glucosamine</name>
        <dbReference type="ChEBI" id="CHEBI:57705"/>
    </ligand>
</feature>
<feature type="binding site" evidence="1">
    <location>
        <position position="328"/>
    </location>
    <ligand>
        <name>UDP-N-acetyl-alpha-D-glucosamine</name>
        <dbReference type="ChEBI" id="CHEBI:57705"/>
    </ligand>
</feature>
<feature type="modified residue" description="2-(S-cysteinyl)pyruvic acid O-phosphothioketal" evidence="1">
    <location>
        <position position="117"/>
    </location>
</feature>
<evidence type="ECO:0000255" key="1">
    <source>
        <dbReference type="HAMAP-Rule" id="MF_00111"/>
    </source>
</evidence>
<sequence>MDKILVRGGNTLKGTIPISGAKNACLPELAATLLTEDTVTLRNVPHLRDVTTMLELLGQHGAAITIDEKLGVSIDCKSIQNTMAPYDLVRTMRASVLVMGPLVARCGHAEISLPGGCAIGSRPINLHLRGLEMMGAHVTLEDGYVRIKAGRLKGAHIVFDLVTVTGTENLLMAATLADGITILDNAAAEPEVVDLANLLMAMGAKIDGAGTRTITIEGVKNLHGTSHDILPDRIETGTFMVAAAVTGGDITMTGTYPALLEAHIAKMREAGCQIDEMDRAIRVRAEAGTLRAVDITTLPHPGFPTDLQAQMMVLLTVAKGAAQIKETIFENRFMHVSELQRMGADITVQGNTAIVRGVPQLRGAPVMATDLRASASLVLAGLCAEGETLISRVYHIDRGYERIEEKLKALGADIQRLGR</sequence>
<keyword id="KW-0131">Cell cycle</keyword>
<keyword id="KW-0132">Cell division</keyword>
<keyword id="KW-0133">Cell shape</keyword>
<keyword id="KW-0961">Cell wall biogenesis/degradation</keyword>
<keyword id="KW-0963">Cytoplasm</keyword>
<keyword id="KW-0573">Peptidoglycan synthesis</keyword>
<keyword id="KW-0670">Pyruvate</keyword>
<keyword id="KW-1185">Reference proteome</keyword>
<keyword id="KW-0808">Transferase</keyword>
<reference key="1">
    <citation type="journal article" date="2009" name="Appl. Environ. Microbiol.">
        <title>Complete genome sequence of the chemolithoautotrophic marine magnetotactic coccus strain MC-1.</title>
        <authorList>
            <person name="Schubbe S."/>
            <person name="Williams T.J."/>
            <person name="Xie G."/>
            <person name="Kiss H.E."/>
            <person name="Brettin T.S."/>
            <person name="Martinez D."/>
            <person name="Ross C.A."/>
            <person name="Schuler D."/>
            <person name="Cox B.L."/>
            <person name="Nealson K.H."/>
            <person name="Bazylinski D.A."/>
        </authorList>
    </citation>
    <scope>NUCLEOTIDE SEQUENCE [LARGE SCALE GENOMIC DNA]</scope>
    <source>
        <strain>ATCC BAA-1437 / JCM 17883 / MC-1</strain>
    </source>
</reference>
<proteinExistence type="inferred from homology"/>
<organism>
    <name type="scientific">Magnetococcus marinus (strain ATCC BAA-1437 / JCM 17883 / MC-1)</name>
    <dbReference type="NCBI Taxonomy" id="156889"/>
    <lineage>
        <taxon>Bacteria</taxon>
        <taxon>Pseudomonadati</taxon>
        <taxon>Pseudomonadota</taxon>
        <taxon>Alphaproteobacteria</taxon>
        <taxon>Magnetococcales</taxon>
        <taxon>Magnetococcaceae</taxon>
        <taxon>Magnetococcus</taxon>
    </lineage>
</organism>